<reference key="1">
    <citation type="journal article" date="2005" name="Genome Res.">
        <title>Sequence, annotation, and analysis of synteny between rice chromosome 3 and diverged grass species.</title>
        <authorList>
            <consortium name="The rice chromosome 3 sequencing consortium"/>
            <person name="Buell C.R."/>
            <person name="Yuan Q."/>
            <person name="Ouyang S."/>
            <person name="Liu J."/>
            <person name="Zhu W."/>
            <person name="Wang A."/>
            <person name="Maiti R."/>
            <person name="Haas B."/>
            <person name="Wortman J."/>
            <person name="Pertea M."/>
            <person name="Jones K.M."/>
            <person name="Kim M."/>
            <person name="Overton L."/>
            <person name="Tsitrin T."/>
            <person name="Fadrosh D."/>
            <person name="Bera J."/>
            <person name="Weaver B."/>
            <person name="Jin S."/>
            <person name="Johri S."/>
            <person name="Reardon M."/>
            <person name="Webb K."/>
            <person name="Hill J."/>
            <person name="Moffat K."/>
            <person name="Tallon L."/>
            <person name="Van Aken S."/>
            <person name="Lewis M."/>
            <person name="Utterback T."/>
            <person name="Feldblyum T."/>
            <person name="Zismann V."/>
            <person name="Iobst S."/>
            <person name="Hsiao J."/>
            <person name="de Vazeille A.R."/>
            <person name="Salzberg S.L."/>
            <person name="White O."/>
            <person name="Fraser C.M."/>
            <person name="Yu Y."/>
            <person name="Kim H."/>
            <person name="Rambo T."/>
            <person name="Currie J."/>
            <person name="Collura K."/>
            <person name="Kernodle-Thompson S."/>
            <person name="Wei F."/>
            <person name="Kudrna K."/>
            <person name="Ammiraju J.S.S."/>
            <person name="Luo M."/>
            <person name="Goicoechea J.L."/>
            <person name="Wing R.A."/>
            <person name="Henry D."/>
            <person name="Oates R."/>
            <person name="Palmer M."/>
            <person name="Pries G."/>
            <person name="Saski C."/>
            <person name="Simmons J."/>
            <person name="Soderlund C."/>
            <person name="Nelson W."/>
            <person name="de la Bastide M."/>
            <person name="Spiegel L."/>
            <person name="Nascimento L."/>
            <person name="Huang E."/>
            <person name="Preston R."/>
            <person name="Zutavern T."/>
            <person name="Palmer L."/>
            <person name="O'Shaughnessy A."/>
            <person name="Dike S."/>
            <person name="McCombie W.R."/>
            <person name="Minx P."/>
            <person name="Cordum H."/>
            <person name="Wilson R."/>
            <person name="Jin W."/>
            <person name="Lee H.R."/>
            <person name="Jiang J."/>
            <person name="Jackson S."/>
        </authorList>
    </citation>
    <scope>NUCLEOTIDE SEQUENCE [LARGE SCALE GENOMIC DNA]</scope>
    <source>
        <strain>cv. Nipponbare</strain>
    </source>
</reference>
<reference key="2">
    <citation type="journal article" date="2005" name="Nature">
        <title>The map-based sequence of the rice genome.</title>
        <authorList>
            <consortium name="International rice genome sequencing project (IRGSP)"/>
        </authorList>
    </citation>
    <scope>NUCLEOTIDE SEQUENCE [LARGE SCALE GENOMIC DNA]</scope>
    <source>
        <strain>cv. Nipponbare</strain>
    </source>
</reference>
<reference key="3">
    <citation type="journal article" date="2008" name="Nucleic Acids Res.">
        <title>The rice annotation project database (RAP-DB): 2008 update.</title>
        <authorList>
            <consortium name="The rice annotation project (RAP)"/>
        </authorList>
    </citation>
    <scope>GENOME REANNOTATION</scope>
    <source>
        <strain>cv. Nipponbare</strain>
    </source>
</reference>
<reference key="4">
    <citation type="journal article" date="2013" name="Rice">
        <title>Improvement of the Oryza sativa Nipponbare reference genome using next generation sequence and optical map data.</title>
        <authorList>
            <person name="Kawahara Y."/>
            <person name="de la Bastide M."/>
            <person name="Hamilton J.P."/>
            <person name="Kanamori H."/>
            <person name="McCombie W.R."/>
            <person name="Ouyang S."/>
            <person name="Schwartz D.C."/>
            <person name="Tanaka T."/>
            <person name="Wu J."/>
            <person name="Zhou S."/>
            <person name="Childs K.L."/>
            <person name="Davidson R.M."/>
            <person name="Lin H."/>
            <person name="Quesada-Ocampo L."/>
            <person name="Vaillancourt B."/>
            <person name="Sakai H."/>
            <person name="Lee S.S."/>
            <person name="Kim J."/>
            <person name="Numa H."/>
            <person name="Itoh T."/>
            <person name="Buell C.R."/>
            <person name="Matsumoto T."/>
        </authorList>
    </citation>
    <scope>GENOME REANNOTATION</scope>
    <source>
        <strain>cv. Nipponbare</strain>
    </source>
</reference>
<reference key="5">
    <citation type="journal article" date="2006" name="Mol. Genet. Genomics">
        <title>Genome-wide analysis of cyclin family in rice (Oryza sativa L.).</title>
        <authorList>
            <person name="La H."/>
            <person name="Li J."/>
            <person name="Ji Z."/>
            <person name="Cheng Y."/>
            <person name="Li X."/>
            <person name="Jiang S."/>
            <person name="Venkatesh P.N."/>
            <person name="Ramachandran S."/>
        </authorList>
    </citation>
    <scope>GENE FAMILY</scope>
    <scope>NOMENCLATURE</scope>
</reference>
<organism>
    <name type="scientific">Oryza sativa subsp. japonica</name>
    <name type="common">Rice</name>
    <dbReference type="NCBI Taxonomy" id="39947"/>
    <lineage>
        <taxon>Eukaryota</taxon>
        <taxon>Viridiplantae</taxon>
        <taxon>Streptophyta</taxon>
        <taxon>Embryophyta</taxon>
        <taxon>Tracheophyta</taxon>
        <taxon>Spermatophyta</taxon>
        <taxon>Magnoliopsida</taxon>
        <taxon>Liliopsida</taxon>
        <taxon>Poales</taxon>
        <taxon>Poaceae</taxon>
        <taxon>BOP clade</taxon>
        <taxon>Oryzoideae</taxon>
        <taxon>Oryzeae</taxon>
        <taxon>Oryzinae</taxon>
        <taxon>Oryza</taxon>
        <taxon>Oryza sativa</taxon>
    </lineage>
</organism>
<comment type="similarity">
    <text evidence="2">Belongs to the cyclin family. Cyclin AB subfamily.</text>
</comment>
<comment type="sequence caution" evidence="2">
    <conflict type="erroneous gene model prediction">
        <sequence resource="EMBL-CDS" id="BAF12554"/>
    </conflict>
</comment>
<keyword id="KW-0131">Cell cycle</keyword>
<keyword id="KW-0132">Cell division</keyword>
<keyword id="KW-0195">Cyclin</keyword>
<keyword id="KW-1185">Reference proteome</keyword>
<accession>Q75I54</accession>
<protein>
    <recommendedName>
        <fullName>Cyclin-A3-1</fullName>
    </recommendedName>
    <alternativeName>
        <fullName>G2/mitotic-specific cyclin-A3-1</fullName>
        <shortName>CycA3;1</shortName>
    </alternativeName>
</protein>
<gene>
    <name type="primary">CYCA3-1</name>
    <name type="ordered locus">Os03g0607600</name>
    <name type="ordered locus">LOC_Os03g41100</name>
    <name type="ORF">OSJNBa0091E13.3</name>
</gene>
<feature type="chain" id="PRO_0000287002" description="Cyclin-A3-1">
    <location>
        <begin position="1"/>
        <end position="373"/>
    </location>
</feature>
<feature type="region of interest" description="Disordered" evidence="1">
    <location>
        <begin position="50"/>
        <end position="80"/>
    </location>
</feature>
<proteinExistence type="inferred from homology"/>
<dbReference type="EMBL" id="AC133860">
    <property type="protein sequence ID" value="AAR87212.1"/>
    <property type="molecule type" value="Genomic_DNA"/>
</dbReference>
<dbReference type="EMBL" id="DP000009">
    <property type="protein sequence ID" value="ABF97546.1"/>
    <property type="molecule type" value="Genomic_DNA"/>
</dbReference>
<dbReference type="EMBL" id="AP008209">
    <property type="protein sequence ID" value="BAF12554.2"/>
    <property type="status" value="ALT_SEQ"/>
    <property type="molecule type" value="Genomic_DNA"/>
</dbReference>
<dbReference type="EMBL" id="AP014959">
    <property type="status" value="NOT_ANNOTATED_CDS"/>
    <property type="molecule type" value="Genomic_DNA"/>
</dbReference>
<dbReference type="RefSeq" id="XP_015629308.1">
    <property type="nucleotide sequence ID" value="XM_015773822.1"/>
</dbReference>
<dbReference type="SMR" id="Q75I54"/>
<dbReference type="FunCoup" id="Q75I54">
    <property type="interactions" value="838"/>
</dbReference>
<dbReference type="STRING" id="39947.Q75I54"/>
<dbReference type="PaxDb" id="39947-Q75I54"/>
<dbReference type="KEGG" id="dosa:Os03g0607600"/>
<dbReference type="eggNOG" id="KOG0654">
    <property type="taxonomic scope" value="Eukaryota"/>
</dbReference>
<dbReference type="InParanoid" id="Q75I54"/>
<dbReference type="OrthoDB" id="5590282at2759"/>
<dbReference type="Proteomes" id="UP000000763">
    <property type="component" value="Chromosome 3"/>
</dbReference>
<dbReference type="Proteomes" id="UP000059680">
    <property type="component" value="Chromosome 3"/>
</dbReference>
<dbReference type="GO" id="GO:0000307">
    <property type="term" value="C:cyclin-dependent protein kinase holoenzyme complex"/>
    <property type="evidence" value="ECO:0000318"/>
    <property type="project" value="GO_Central"/>
</dbReference>
<dbReference type="GO" id="GO:0005737">
    <property type="term" value="C:cytoplasm"/>
    <property type="evidence" value="ECO:0000318"/>
    <property type="project" value="GO_Central"/>
</dbReference>
<dbReference type="GO" id="GO:0005634">
    <property type="term" value="C:nucleus"/>
    <property type="evidence" value="ECO:0000318"/>
    <property type="project" value="GO_Central"/>
</dbReference>
<dbReference type="GO" id="GO:0016538">
    <property type="term" value="F:cyclin-dependent protein serine/threonine kinase regulator activity"/>
    <property type="evidence" value="ECO:0000318"/>
    <property type="project" value="GO_Central"/>
</dbReference>
<dbReference type="GO" id="GO:0051301">
    <property type="term" value="P:cell division"/>
    <property type="evidence" value="ECO:0007669"/>
    <property type="project" value="UniProtKB-KW"/>
</dbReference>
<dbReference type="GO" id="GO:0000082">
    <property type="term" value="P:G1/S transition of mitotic cell cycle"/>
    <property type="evidence" value="ECO:0000318"/>
    <property type="project" value="GO_Central"/>
</dbReference>
<dbReference type="CDD" id="cd20562">
    <property type="entry name" value="CYCLIN_AtCycA_like_rpt1"/>
    <property type="match status" value="1"/>
</dbReference>
<dbReference type="FunFam" id="1.10.472.10:FF:000013">
    <property type="entry name" value="Cyclin A1"/>
    <property type="match status" value="1"/>
</dbReference>
<dbReference type="FunFam" id="1.10.472.10:FF:000167">
    <property type="entry name" value="Mitotic cyclin 6"/>
    <property type="match status" value="1"/>
</dbReference>
<dbReference type="Gene3D" id="1.10.472.10">
    <property type="entry name" value="Cyclin-like"/>
    <property type="match status" value="2"/>
</dbReference>
<dbReference type="InterPro" id="IPR039361">
    <property type="entry name" value="Cyclin"/>
</dbReference>
<dbReference type="InterPro" id="IPR013763">
    <property type="entry name" value="Cyclin-like_dom"/>
</dbReference>
<dbReference type="InterPro" id="IPR036915">
    <property type="entry name" value="Cyclin-like_sf"/>
</dbReference>
<dbReference type="InterPro" id="IPR004367">
    <property type="entry name" value="Cyclin_C-dom"/>
</dbReference>
<dbReference type="InterPro" id="IPR006671">
    <property type="entry name" value="Cyclin_N"/>
</dbReference>
<dbReference type="InterPro" id="IPR048258">
    <property type="entry name" value="Cyclins_cyclin-box"/>
</dbReference>
<dbReference type="PANTHER" id="PTHR10177">
    <property type="entry name" value="CYCLINS"/>
    <property type="match status" value="1"/>
</dbReference>
<dbReference type="Pfam" id="PF02984">
    <property type="entry name" value="Cyclin_C"/>
    <property type="match status" value="1"/>
</dbReference>
<dbReference type="Pfam" id="PF00134">
    <property type="entry name" value="Cyclin_N"/>
    <property type="match status" value="1"/>
</dbReference>
<dbReference type="SMART" id="SM00385">
    <property type="entry name" value="CYCLIN"/>
    <property type="match status" value="2"/>
</dbReference>
<dbReference type="SMART" id="SM01332">
    <property type="entry name" value="Cyclin_C"/>
    <property type="match status" value="1"/>
</dbReference>
<dbReference type="SUPFAM" id="SSF47954">
    <property type="entry name" value="Cyclin-like"/>
    <property type="match status" value="2"/>
</dbReference>
<dbReference type="PROSITE" id="PS00292">
    <property type="entry name" value="CYCLINS"/>
    <property type="match status" value="1"/>
</dbReference>
<name>CCA31_ORYSJ</name>
<evidence type="ECO:0000256" key="1">
    <source>
        <dbReference type="SAM" id="MobiDB-lite"/>
    </source>
</evidence>
<evidence type="ECO:0000305" key="2"/>
<sequence length="373" mass="41380">MAGKENAAAAQPRLTRAAAKRAAAVTAVAVAAKRKRVALSELPTLSNNNAVVLKPQPAPRGGKRAASHAAEPKKPAPPPAPAVVVVVDDDEEGEGDPQLCAPYASDINSYLRSMEVQAKRRPAADYIETVQVDVTANMRGILVDWLVEVAEEYKLVSDTLYLTVSYIDRFLSAKSINRQKLQLLGVSAMLIASKYEEISPPNVEDFCYITDNTYMKQEVVKMERDILNVLKFEMGNPTTKTFLRMFIRSSQEDDKYPSLPLEFMCSYLAELSLLEYGCVRLLPSVVAASVVFVARLTLDSDTNPWSKKLQEVTGYRASELKDCITCIHDLQLNRKGSSLMAIRDKYKQHRFKGVSTLLPPVEIPASYFEDLNE</sequence>